<accession>A5EJR4</accession>
<gene>
    <name evidence="1" type="primary">queA</name>
    <name type="ordered locus">BBta_4366</name>
</gene>
<feature type="chain" id="PRO_1000015182" description="S-adenosylmethionine:tRNA ribosyltransferase-isomerase">
    <location>
        <begin position="1"/>
        <end position="364"/>
    </location>
</feature>
<comment type="function">
    <text evidence="1">Transfers and isomerizes the ribose moiety from AdoMet to the 7-aminomethyl group of 7-deazaguanine (preQ1-tRNA) to give epoxyqueuosine (oQ-tRNA).</text>
</comment>
<comment type="catalytic activity">
    <reaction evidence="1">
        <text>7-aminomethyl-7-carbaguanosine(34) in tRNA + S-adenosyl-L-methionine = epoxyqueuosine(34) in tRNA + adenine + L-methionine + 2 H(+)</text>
        <dbReference type="Rhea" id="RHEA:32155"/>
        <dbReference type="Rhea" id="RHEA-COMP:10342"/>
        <dbReference type="Rhea" id="RHEA-COMP:18582"/>
        <dbReference type="ChEBI" id="CHEBI:15378"/>
        <dbReference type="ChEBI" id="CHEBI:16708"/>
        <dbReference type="ChEBI" id="CHEBI:57844"/>
        <dbReference type="ChEBI" id="CHEBI:59789"/>
        <dbReference type="ChEBI" id="CHEBI:82833"/>
        <dbReference type="ChEBI" id="CHEBI:194443"/>
        <dbReference type="EC" id="2.4.99.17"/>
    </reaction>
</comment>
<comment type="pathway">
    <text evidence="1">tRNA modification; tRNA-queuosine biosynthesis.</text>
</comment>
<comment type="subunit">
    <text evidence="1">Monomer.</text>
</comment>
<comment type="subcellular location">
    <subcellularLocation>
        <location evidence="1">Cytoplasm</location>
    </subcellularLocation>
</comment>
<comment type="similarity">
    <text evidence="1">Belongs to the QueA family.</text>
</comment>
<proteinExistence type="inferred from homology"/>
<organism>
    <name type="scientific">Bradyrhizobium sp. (strain BTAi1 / ATCC BAA-1182)</name>
    <dbReference type="NCBI Taxonomy" id="288000"/>
    <lineage>
        <taxon>Bacteria</taxon>
        <taxon>Pseudomonadati</taxon>
        <taxon>Pseudomonadota</taxon>
        <taxon>Alphaproteobacteria</taxon>
        <taxon>Hyphomicrobiales</taxon>
        <taxon>Nitrobacteraceae</taxon>
        <taxon>Bradyrhizobium</taxon>
    </lineage>
</organism>
<keyword id="KW-0963">Cytoplasm</keyword>
<keyword id="KW-0671">Queuosine biosynthesis</keyword>
<keyword id="KW-1185">Reference proteome</keyword>
<keyword id="KW-0949">S-adenosyl-L-methionine</keyword>
<keyword id="KW-0808">Transferase</keyword>
<reference key="1">
    <citation type="journal article" date="2007" name="Science">
        <title>Legumes symbioses: absence of nod genes in photosynthetic bradyrhizobia.</title>
        <authorList>
            <person name="Giraud E."/>
            <person name="Moulin L."/>
            <person name="Vallenet D."/>
            <person name="Barbe V."/>
            <person name="Cytryn E."/>
            <person name="Avarre J.-C."/>
            <person name="Jaubert M."/>
            <person name="Simon D."/>
            <person name="Cartieaux F."/>
            <person name="Prin Y."/>
            <person name="Bena G."/>
            <person name="Hannibal L."/>
            <person name="Fardoux J."/>
            <person name="Kojadinovic M."/>
            <person name="Vuillet L."/>
            <person name="Lajus A."/>
            <person name="Cruveiller S."/>
            <person name="Rouy Z."/>
            <person name="Mangenot S."/>
            <person name="Segurens B."/>
            <person name="Dossat C."/>
            <person name="Franck W.L."/>
            <person name="Chang W.-S."/>
            <person name="Saunders E."/>
            <person name="Bruce D."/>
            <person name="Richardson P."/>
            <person name="Normand P."/>
            <person name="Dreyfus B."/>
            <person name="Pignol D."/>
            <person name="Stacey G."/>
            <person name="Emerich D."/>
            <person name="Vermeglio A."/>
            <person name="Medigue C."/>
            <person name="Sadowsky M."/>
        </authorList>
    </citation>
    <scope>NUCLEOTIDE SEQUENCE [LARGE SCALE GENOMIC DNA]</scope>
    <source>
        <strain>BTAi1 / ATCC BAA-1182</strain>
    </source>
</reference>
<name>QUEA_BRASB</name>
<dbReference type="EC" id="2.4.99.17" evidence="1"/>
<dbReference type="EMBL" id="CP000494">
    <property type="protein sequence ID" value="ABQ36408.1"/>
    <property type="molecule type" value="Genomic_DNA"/>
</dbReference>
<dbReference type="RefSeq" id="WP_012044405.1">
    <property type="nucleotide sequence ID" value="NC_009485.1"/>
</dbReference>
<dbReference type="SMR" id="A5EJR4"/>
<dbReference type="STRING" id="288000.BBta_4366"/>
<dbReference type="KEGG" id="bbt:BBta_4366"/>
<dbReference type="eggNOG" id="COG0809">
    <property type="taxonomic scope" value="Bacteria"/>
</dbReference>
<dbReference type="HOGENOM" id="CLU_039110_1_1_5"/>
<dbReference type="OrthoDB" id="9805933at2"/>
<dbReference type="UniPathway" id="UPA00392"/>
<dbReference type="Proteomes" id="UP000000246">
    <property type="component" value="Chromosome"/>
</dbReference>
<dbReference type="GO" id="GO:0005737">
    <property type="term" value="C:cytoplasm"/>
    <property type="evidence" value="ECO:0007669"/>
    <property type="project" value="UniProtKB-SubCell"/>
</dbReference>
<dbReference type="GO" id="GO:0051075">
    <property type="term" value="F:S-adenosylmethionine:tRNA ribosyltransferase-isomerase activity"/>
    <property type="evidence" value="ECO:0007669"/>
    <property type="project" value="UniProtKB-EC"/>
</dbReference>
<dbReference type="GO" id="GO:0008616">
    <property type="term" value="P:queuosine biosynthetic process"/>
    <property type="evidence" value="ECO:0007669"/>
    <property type="project" value="UniProtKB-UniRule"/>
</dbReference>
<dbReference type="GO" id="GO:0002099">
    <property type="term" value="P:tRNA wobble guanine modification"/>
    <property type="evidence" value="ECO:0007669"/>
    <property type="project" value="TreeGrafter"/>
</dbReference>
<dbReference type="FunFam" id="3.40.1780.10:FF:000001">
    <property type="entry name" value="S-adenosylmethionine:tRNA ribosyltransferase-isomerase"/>
    <property type="match status" value="1"/>
</dbReference>
<dbReference type="Gene3D" id="2.40.10.240">
    <property type="entry name" value="QueA-like"/>
    <property type="match status" value="1"/>
</dbReference>
<dbReference type="Gene3D" id="3.40.1780.10">
    <property type="entry name" value="QueA-like"/>
    <property type="match status" value="1"/>
</dbReference>
<dbReference type="HAMAP" id="MF_00113">
    <property type="entry name" value="QueA"/>
    <property type="match status" value="1"/>
</dbReference>
<dbReference type="InterPro" id="IPR003699">
    <property type="entry name" value="QueA"/>
</dbReference>
<dbReference type="InterPro" id="IPR042118">
    <property type="entry name" value="QueA_dom1"/>
</dbReference>
<dbReference type="InterPro" id="IPR042119">
    <property type="entry name" value="QueA_dom2"/>
</dbReference>
<dbReference type="InterPro" id="IPR036100">
    <property type="entry name" value="QueA_sf"/>
</dbReference>
<dbReference type="NCBIfam" id="NF001140">
    <property type="entry name" value="PRK00147.1"/>
    <property type="match status" value="1"/>
</dbReference>
<dbReference type="NCBIfam" id="TIGR00113">
    <property type="entry name" value="queA"/>
    <property type="match status" value="1"/>
</dbReference>
<dbReference type="PANTHER" id="PTHR30307">
    <property type="entry name" value="S-ADENOSYLMETHIONINE:TRNA RIBOSYLTRANSFERASE-ISOMERASE"/>
    <property type="match status" value="1"/>
</dbReference>
<dbReference type="PANTHER" id="PTHR30307:SF0">
    <property type="entry name" value="S-ADENOSYLMETHIONINE:TRNA RIBOSYLTRANSFERASE-ISOMERASE"/>
    <property type="match status" value="1"/>
</dbReference>
<dbReference type="Pfam" id="PF02547">
    <property type="entry name" value="Queuosine_synth"/>
    <property type="match status" value="1"/>
</dbReference>
<dbReference type="SUPFAM" id="SSF111337">
    <property type="entry name" value="QueA-like"/>
    <property type="match status" value="1"/>
</dbReference>
<evidence type="ECO:0000255" key="1">
    <source>
        <dbReference type="HAMAP-Rule" id="MF_00113"/>
    </source>
</evidence>
<sequence length="364" mass="39626">MRTDLFDFHLPPENIALRPASPREAARMLVVQGDGVLRDRIVADLPDWLEPGDQLVVNDTKVIAAQLSGRRVSRETEAKIEATLIKRLDGSRWQALVRPAKKLAPGDTIRFGHEGKVCLLGHLDATVEAKGEEGEVTLSFVFHGPALDQAIADLGRPPLPPYIAGKRPADEQDAADYQTMFAAKEGAVAAPTAGLHFTPALEQRLRARGVGLQRVTLHVGAGTFLPVKVEDTEGHRMHAEWGSLSAETAAALNEARAKGGRIVAVGTTSMRLLESAALPDGTIAPFEAETSIFITPGYRFRAVDILMTNFHLPRSTLFMLVSAFAGLETMQAAYAHAIRSGYRFYSYGDACLLFRQPDERIVEP</sequence>
<protein>
    <recommendedName>
        <fullName evidence="1">S-adenosylmethionine:tRNA ribosyltransferase-isomerase</fullName>
        <ecNumber evidence="1">2.4.99.17</ecNumber>
    </recommendedName>
    <alternativeName>
        <fullName evidence="1">Queuosine biosynthesis protein QueA</fullName>
    </alternativeName>
</protein>